<dbReference type="EMBL" id="CP000512">
    <property type="protein sequence ID" value="ABM33560.1"/>
    <property type="molecule type" value="Genomic_DNA"/>
</dbReference>
<dbReference type="RefSeq" id="WP_011796070.1">
    <property type="nucleotide sequence ID" value="NC_008752.1"/>
</dbReference>
<dbReference type="SMR" id="A1TRH2"/>
<dbReference type="STRING" id="397945.Aave_2993"/>
<dbReference type="KEGG" id="aav:Aave_2993"/>
<dbReference type="eggNOG" id="COG1327">
    <property type="taxonomic scope" value="Bacteria"/>
</dbReference>
<dbReference type="HOGENOM" id="CLU_108412_0_1_4"/>
<dbReference type="OrthoDB" id="9807461at2"/>
<dbReference type="Proteomes" id="UP000002596">
    <property type="component" value="Chromosome"/>
</dbReference>
<dbReference type="GO" id="GO:0005524">
    <property type="term" value="F:ATP binding"/>
    <property type="evidence" value="ECO:0007669"/>
    <property type="project" value="UniProtKB-KW"/>
</dbReference>
<dbReference type="GO" id="GO:0003677">
    <property type="term" value="F:DNA binding"/>
    <property type="evidence" value="ECO:0007669"/>
    <property type="project" value="UniProtKB-KW"/>
</dbReference>
<dbReference type="GO" id="GO:0008270">
    <property type="term" value="F:zinc ion binding"/>
    <property type="evidence" value="ECO:0007669"/>
    <property type="project" value="UniProtKB-UniRule"/>
</dbReference>
<dbReference type="GO" id="GO:0045892">
    <property type="term" value="P:negative regulation of DNA-templated transcription"/>
    <property type="evidence" value="ECO:0007669"/>
    <property type="project" value="UniProtKB-UniRule"/>
</dbReference>
<dbReference type="HAMAP" id="MF_00440">
    <property type="entry name" value="NrdR"/>
    <property type="match status" value="1"/>
</dbReference>
<dbReference type="InterPro" id="IPR005144">
    <property type="entry name" value="ATP-cone_dom"/>
</dbReference>
<dbReference type="InterPro" id="IPR055173">
    <property type="entry name" value="NrdR-like_N"/>
</dbReference>
<dbReference type="InterPro" id="IPR003796">
    <property type="entry name" value="RNR_NrdR-like"/>
</dbReference>
<dbReference type="NCBIfam" id="TIGR00244">
    <property type="entry name" value="transcriptional regulator NrdR"/>
    <property type="match status" value="1"/>
</dbReference>
<dbReference type="PANTHER" id="PTHR30455">
    <property type="entry name" value="TRANSCRIPTIONAL REPRESSOR NRDR"/>
    <property type="match status" value="1"/>
</dbReference>
<dbReference type="PANTHER" id="PTHR30455:SF2">
    <property type="entry name" value="TRANSCRIPTIONAL REPRESSOR NRDR"/>
    <property type="match status" value="1"/>
</dbReference>
<dbReference type="Pfam" id="PF03477">
    <property type="entry name" value="ATP-cone"/>
    <property type="match status" value="1"/>
</dbReference>
<dbReference type="Pfam" id="PF22811">
    <property type="entry name" value="Zn_ribbon_NrdR"/>
    <property type="match status" value="1"/>
</dbReference>
<dbReference type="PROSITE" id="PS51161">
    <property type="entry name" value="ATP_CONE"/>
    <property type="match status" value="1"/>
</dbReference>
<evidence type="ECO:0000255" key="1">
    <source>
        <dbReference type="HAMAP-Rule" id="MF_00440"/>
    </source>
</evidence>
<sequence>MKCPFCSHPETQVVETRVAEDGDFVRRRRQCGACDKRFTTYERPEVSFPNVVKKDGRRIEYDRSKLIGSFSIALRKRPVSTTQIDSAIERIEEKLLNLGQREVLSSRIGELVMRELKKLDKVAYIRFASVYRNFEDIDEFRALVDEVRK</sequence>
<reference key="1">
    <citation type="submission" date="2006-12" db="EMBL/GenBank/DDBJ databases">
        <title>Complete sequence of Acidovorax avenae subsp. citrulli AAC00-1.</title>
        <authorList>
            <person name="Copeland A."/>
            <person name="Lucas S."/>
            <person name="Lapidus A."/>
            <person name="Barry K."/>
            <person name="Detter J.C."/>
            <person name="Glavina del Rio T."/>
            <person name="Dalin E."/>
            <person name="Tice H."/>
            <person name="Pitluck S."/>
            <person name="Kiss H."/>
            <person name="Brettin T."/>
            <person name="Bruce D."/>
            <person name="Han C."/>
            <person name="Tapia R."/>
            <person name="Gilna P."/>
            <person name="Schmutz J."/>
            <person name="Larimer F."/>
            <person name="Land M."/>
            <person name="Hauser L."/>
            <person name="Kyrpides N."/>
            <person name="Kim E."/>
            <person name="Stahl D."/>
            <person name="Richardson P."/>
        </authorList>
    </citation>
    <scope>NUCLEOTIDE SEQUENCE [LARGE SCALE GENOMIC DNA]</scope>
    <source>
        <strain>AAC00-1</strain>
    </source>
</reference>
<proteinExistence type="inferred from homology"/>
<organism>
    <name type="scientific">Paracidovorax citrulli (strain AAC00-1)</name>
    <name type="common">Acidovorax citrulli</name>
    <dbReference type="NCBI Taxonomy" id="397945"/>
    <lineage>
        <taxon>Bacteria</taxon>
        <taxon>Pseudomonadati</taxon>
        <taxon>Pseudomonadota</taxon>
        <taxon>Betaproteobacteria</taxon>
        <taxon>Burkholderiales</taxon>
        <taxon>Comamonadaceae</taxon>
        <taxon>Paracidovorax</taxon>
    </lineage>
</organism>
<accession>A1TRH2</accession>
<gene>
    <name evidence="1" type="primary">nrdR</name>
    <name type="ordered locus">Aave_2993</name>
</gene>
<name>NRDR_PARC0</name>
<feature type="chain" id="PRO_1000080696" description="Transcriptional repressor NrdR">
    <location>
        <begin position="1"/>
        <end position="149"/>
    </location>
</feature>
<feature type="domain" description="ATP-cone" evidence="1">
    <location>
        <begin position="49"/>
        <end position="139"/>
    </location>
</feature>
<feature type="zinc finger region" evidence="1">
    <location>
        <begin position="3"/>
        <end position="34"/>
    </location>
</feature>
<comment type="function">
    <text evidence="1">Negatively regulates transcription of bacterial ribonucleotide reductase nrd genes and operons by binding to NrdR-boxes.</text>
</comment>
<comment type="cofactor">
    <cofactor evidence="1">
        <name>Zn(2+)</name>
        <dbReference type="ChEBI" id="CHEBI:29105"/>
    </cofactor>
    <text evidence="1">Binds 1 zinc ion.</text>
</comment>
<comment type="similarity">
    <text evidence="1">Belongs to the NrdR family.</text>
</comment>
<keyword id="KW-0067">ATP-binding</keyword>
<keyword id="KW-0238">DNA-binding</keyword>
<keyword id="KW-0479">Metal-binding</keyword>
<keyword id="KW-0547">Nucleotide-binding</keyword>
<keyword id="KW-0678">Repressor</keyword>
<keyword id="KW-0804">Transcription</keyword>
<keyword id="KW-0805">Transcription regulation</keyword>
<keyword id="KW-0862">Zinc</keyword>
<keyword id="KW-0863">Zinc-finger</keyword>
<protein>
    <recommendedName>
        <fullName evidence="1">Transcriptional repressor NrdR</fullName>
    </recommendedName>
</protein>